<proteinExistence type="inferred from homology"/>
<organism>
    <name type="scientific">Pectobacterium carotovorum subsp. carotovorum (strain PC1)</name>
    <dbReference type="NCBI Taxonomy" id="561230"/>
    <lineage>
        <taxon>Bacteria</taxon>
        <taxon>Pseudomonadati</taxon>
        <taxon>Pseudomonadota</taxon>
        <taxon>Gammaproteobacteria</taxon>
        <taxon>Enterobacterales</taxon>
        <taxon>Pectobacteriaceae</taxon>
        <taxon>Pectobacterium</taxon>
    </lineage>
</organism>
<dbReference type="EMBL" id="CP001657">
    <property type="protein sequence ID" value="ACT13154.1"/>
    <property type="molecule type" value="Genomic_DNA"/>
</dbReference>
<dbReference type="RefSeq" id="WP_015840345.1">
    <property type="nucleotide sequence ID" value="NC_012917.1"/>
</dbReference>
<dbReference type="SMR" id="C6DHY1"/>
<dbReference type="STRING" id="561230.PC1_2114"/>
<dbReference type="GeneID" id="67794104"/>
<dbReference type="KEGG" id="pct:PC1_2114"/>
<dbReference type="eggNOG" id="COG0216">
    <property type="taxonomic scope" value="Bacteria"/>
</dbReference>
<dbReference type="HOGENOM" id="CLU_036856_0_1_6"/>
<dbReference type="OrthoDB" id="9806673at2"/>
<dbReference type="Proteomes" id="UP000002736">
    <property type="component" value="Chromosome"/>
</dbReference>
<dbReference type="GO" id="GO:0005737">
    <property type="term" value="C:cytoplasm"/>
    <property type="evidence" value="ECO:0007669"/>
    <property type="project" value="UniProtKB-SubCell"/>
</dbReference>
<dbReference type="GO" id="GO:0016149">
    <property type="term" value="F:translation release factor activity, codon specific"/>
    <property type="evidence" value="ECO:0007669"/>
    <property type="project" value="UniProtKB-UniRule"/>
</dbReference>
<dbReference type="FunFam" id="3.30.160.20:FF:000004">
    <property type="entry name" value="Peptide chain release factor 1"/>
    <property type="match status" value="1"/>
</dbReference>
<dbReference type="FunFam" id="3.30.70.1660:FF:000002">
    <property type="entry name" value="Peptide chain release factor 1"/>
    <property type="match status" value="1"/>
</dbReference>
<dbReference type="FunFam" id="3.30.70.1660:FF:000004">
    <property type="entry name" value="Peptide chain release factor 1"/>
    <property type="match status" value="1"/>
</dbReference>
<dbReference type="Gene3D" id="3.30.160.20">
    <property type="match status" value="1"/>
</dbReference>
<dbReference type="Gene3D" id="3.30.70.1660">
    <property type="match status" value="1"/>
</dbReference>
<dbReference type="Gene3D" id="6.10.140.1950">
    <property type="match status" value="1"/>
</dbReference>
<dbReference type="HAMAP" id="MF_00093">
    <property type="entry name" value="Rel_fac_1"/>
    <property type="match status" value="1"/>
</dbReference>
<dbReference type="InterPro" id="IPR005139">
    <property type="entry name" value="PCRF"/>
</dbReference>
<dbReference type="InterPro" id="IPR000352">
    <property type="entry name" value="Pep_chain_release_fac_I"/>
</dbReference>
<dbReference type="InterPro" id="IPR045853">
    <property type="entry name" value="Pep_chain_release_fac_I_sf"/>
</dbReference>
<dbReference type="InterPro" id="IPR050057">
    <property type="entry name" value="Prokaryotic/Mito_RF"/>
</dbReference>
<dbReference type="InterPro" id="IPR004373">
    <property type="entry name" value="RF-1"/>
</dbReference>
<dbReference type="NCBIfam" id="TIGR00019">
    <property type="entry name" value="prfA"/>
    <property type="match status" value="1"/>
</dbReference>
<dbReference type="NCBIfam" id="NF001859">
    <property type="entry name" value="PRK00591.1"/>
    <property type="match status" value="1"/>
</dbReference>
<dbReference type="PANTHER" id="PTHR43804">
    <property type="entry name" value="LD18447P"/>
    <property type="match status" value="1"/>
</dbReference>
<dbReference type="PANTHER" id="PTHR43804:SF7">
    <property type="entry name" value="LD18447P"/>
    <property type="match status" value="1"/>
</dbReference>
<dbReference type="Pfam" id="PF03462">
    <property type="entry name" value="PCRF"/>
    <property type="match status" value="1"/>
</dbReference>
<dbReference type="Pfam" id="PF00472">
    <property type="entry name" value="RF-1"/>
    <property type="match status" value="1"/>
</dbReference>
<dbReference type="SMART" id="SM00937">
    <property type="entry name" value="PCRF"/>
    <property type="match status" value="1"/>
</dbReference>
<dbReference type="SUPFAM" id="SSF75620">
    <property type="entry name" value="Release factor"/>
    <property type="match status" value="1"/>
</dbReference>
<dbReference type="PROSITE" id="PS00745">
    <property type="entry name" value="RF_PROK_I"/>
    <property type="match status" value="1"/>
</dbReference>
<gene>
    <name evidence="1" type="primary">prfA</name>
    <name type="ordered locus">PC1_2114</name>
</gene>
<sequence length="360" mass="40368">MKPSIVAKLEALQERHEEVQALLGEPSVIADMDRFRALSREYAQLTDITRCFQQWQQAQEDQQTAEMMLDDPEMRDMAQEELKEGKATIEALEQQLQVLLLPKDPDDERGCFLEVRAGTGGDEAAIFAGDLFRMYSRYAESRRWRVEVMSASDGEHGGYKEVIAKISGDGVYGQLKFESGGHRVQRVPATESQGRIHTSACTVAVMAEVPEAELPDINPADLRIDTFRSSGAGGQHVNTTDSAIRITHLPTGIVVECQDERSQHKNKAKALSVLGARIRAAEVQKRQQEEASTRRNLLGSGDRSDRIRTYNFPQGRVTDHRINLTLYRLDEVMEGKLDTLIQPVVQEYQADQLAALSEQE</sequence>
<accession>C6DHY1</accession>
<feature type="chain" id="PRO_1000202699" description="Peptide chain release factor 1">
    <location>
        <begin position="1"/>
        <end position="360"/>
    </location>
</feature>
<feature type="region of interest" description="Disordered" evidence="2">
    <location>
        <begin position="284"/>
        <end position="305"/>
    </location>
</feature>
<feature type="compositionally biased region" description="Basic and acidic residues" evidence="2">
    <location>
        <begin position="284"/>
        <end position="293"/>
    </location>
</feature>
<feature type="modified residue" description="N5-methylglutamine" evidence="1">
    <location>
        <position position="235"/>
    </location>
</feature>
<reference key="1">
    <citation type="submission" date="2009-07" db="EMBL/GenBank/DDBJ databases">
        <title>Complete sequence of Pectobacterium carotovorum subsp. carotovorum PC1.</title>
        <authorList>
            <consortium name="US DOE Joint Genome Institute"/>
            <person name="Lucas S."/>
            <person name="Copeland A."/>
            <person name="Lapidus A."/>
            <person name="Glavina del Rio T."/>
            <person name="Tice H."/>
            <person name="Bruce D."/>
            <person name="Goodwin L."/>
            <person name="Pitluck S."/>
            <person name="Munk A.C."/>
            <person name="Brettin T."/>
            <person name="Detter J.C."/>
            <person name="Han C."/>
            <person name="Tapia R."/>
            <person name="Larimer F."/>
            <person name="Land M."/>
            <person name="Hauser L."/>
            <person name="Kyrpides N."/>
            <person name="Mikhailova N."/>
            <person name="Balakrishnan V."/>
            <person name="Glasner J."/>
            <person name="Perna N.T."/>
        </authorList>
    </citation>
    <scope>NUCLEOTIDE SEQUENCE [LARGE SCALE GENOMIC DNA]</scope>
    <source>
        <strain>PC1</strain>
    </source>
</reference>
<evidence type="ECO:0000255" key="1">
    <source>
        <dbReference type="HAMAP-Rule" id="MF_00093"/>
    </source>
</evidence>
<evidence type="ECO:0000256" key="2">
    <source>
        <dbReference type="SAM" id="MobiDB-lite"/>
    </source>
</evidence>
<comment type="function">
    <text evidence="1">Peptide chain release factor 1 directs the termination of translation in response to the peptide chain termination codons UAG and UAA.</text>
</comment>
<comment type="subcellular location">
    <subcellularLocation>
        <location evidence="1">Cytoplasm</location>
    </subcellularLocation>
</comment>
<comment type="PTM">
    <text evidence="1">Methylated by PrmC. Methylation increases the termination efficiency of RF1.</text>
</comment>
<comment type="similarity">
    <text evidence="1">Belongs to the prokaryotic/mitochondrial release factor family.</text>
</comment>
<name>RF1_PECCP</name>
<keyword id="KW-0963">Cytoplasm</keyword>
<keyword id="KW-0488">Methylation</keyword>
<keyword id="KW-0648">Protein biosynthesis</keyword>
<protein>
    <recommendedName>
        <fullName evidence="1">Peptide chain release factor 1</fullName>
        <shortName evidence="1">RF-1</shortName>
    </recommendedName>
</protein>